<comment type="function">
    <text evidence="1">Catalyzes the desulfonation of aliphatic sulfonates.</text>
</comment>
<comment type="catalytic activity">
    <reaction evidence="1">
        <text>an alkanesulfonate + FMNH2 + O2 = an aldehyde + FMN + sulfite + H2O + 2 H(+)</text>
        <dbReference type="Rhea" id="RHEA:23064"/>
        <dbReference type="ChEBI" id="CHEBI:15377"/>
        <dbReference type="ChEBI" id="CHEBI:15378"/>
        <dbReference type="ChEBI" id="CHEBI:15379"/>
        <dbReference type="ChEBI" id="CHEBI:17359"/>
        <dbReference type="ChEBI" id="CHEBI:17478"/>
        <dbReference type="ChEBI" id="CHEBI:57618"/>
        <dbReference type="ChEBI" id="CHEBI:58210"/>
        <dbReference type="ChEBI" id="CHEBI:134249"/>
        <dbReference type="EC" id="1.14.14.5"/>
    </reaction>
</comment>
<comment type="similarity">
    <text evidence="1">Belongs to the SsuD family.</text>
</comment>
<gene>
    <name evidence="1" type="primary">ssuD</name>
    <name type="ordered locus">Atu3426</name>
    <name type="ORF">AGR_L_2796</name>
</gene>
<evidence type="ECO:0000255" key="1">
    <source>
        <dbReference type="HAMAP-Rule" id="MF_01229"/>
    </source>
</evidence>
<name>SSUD_AGRFC</name>
<reference key="1">
    <citation type="journal article" date="2001" name="Science">
        <title>The genome of the natural genetic engineer Agrobacterium tumefaciens C58.</title>
        <authorList>
            <person name="Wood D.W."/>
            <person name="Setubal J.C."/>
            <person name="Kaul R."/>
            <person name="Monks D.E."/>
            <person name="Kitajima J.P."/>
            <person name="Okura V.K."/>
            <person name="Zhou Y."/>
            <person name="Chen L."/>
            <person name="Wood G.E."/>
            <person name="Almeida N.F. Jr."/>
            <person name="Woo L."/>
            <person name="Chen Y."/>
            <person name="Paulsen I.T."/>
            <person name="Eisen J.A."/>
            <person name="Karp P.D."/>
            <person name="Bovee D. Sr."/>
            <person name="Chapman P."/>
            <person name="Clendenning J."/>
            <person name="Deatherage G."/>
            <person name="Gillet W."/>
            <person name="Grant C."/>
            <person name="Kutyavin T."/>
            <person name="Levy R."/>
            <person name="Li M.-J."/>
            <person name="McClelland E."/>
            <person name="Palmieri A."/>
            <person name="Raymond C."/>
            <person name="Rouse G."/>
            <person name="Saenphimmachak C."/>
            <person name="Wu Z."/>
            <person name="Romero P."/>
            <person name="Gordon D."/>
            <person name="Zhang S."/>
            <person name="Yoo H."/>
            <person name="Tao Y."/>
            <person name="Biddle P."/>
            <person name="Jung M."/>
            <person name="Krespan W."/>
            <person name="Perry M."/>
            <person name="Gordon-Kamm B."/>
            <person name="Liao L."/>
            <person name="Kim S."/>
            <person name="Hendrick C."/>
            <person name="Zhao Z.-Y."/>
            <person name="Dolan M."/>
            <person name="Chumley F."/>
            <person name="Tingey S.V."/>
            <person name="Tomb J.-F."/>
            <person name="Gordon M.P."/>
            <person name="Olson M.V."/>
            <person name="Nester E.W."/>
        </authorList>
    </citation>
    <scope>NUCLEOTIDE SEQUENCE [LARGE SCALE GENOMIC DNA]</scope>
    <source>
        <strain>C58 / ATCC 33970</strain>
    </source>
</reference>
<reference key="2">
    <citation type="journal article" date="2001" name="Science">
        <title>Genome sequence of the plant pathogen and biotechnology agent Agrobacterium tumefaciens C58.</title>
        <authorList>
            <person name="Goodner B."/>
            <person name="Hinkle G."/>
            <person name="Gattung S."/>
            <person name="Miller N."/>
            <person name="Blanchard M."/>
            <person name="Qurollo B."/>
            <person name="Goldman B.S."/>
            <person name="Cao Y."/>
            <person name="Askenazi M."/>
            <person name="Halling C."/>
            <person name="Mullin L."/>
            <person name="Houmiel K."/>
            <person name="Gordon J."/>
            <person name="Vaudin M."/>
            <person name="Iartchouk O."/>
            <person name="Epp A."/>
            <person name="Liu F."/>
            <person name="Wollam C."/>
            <person name="Allinger M."/>
            <person name="Doughty D."/>
            <person name="Scott C."/>
            <person name="Lappas C."/>
            <person name="Markelz B."/>
            <person name="Flanagan C."/>
            <person name="Crowell C."/>
            <person name="Gurson J."/>
            <person name="Lomo C."/>
            <person name="Sear C."/>
            <person name="Strub G."/>
            <person name="Cielo C."/>
            <person name="Slater S."/>
        </authorList>
    </citation>
    <scope>NUCLEOTIDE SEQUENCE [LARGE SCALE GENOMIC DNA]</scope>
    <source>
        <strain>C58 / ATCC 33970</strain>
    </source>
</reference>
<accession>Q8UAE8</accession>
<feature type="chain" id="PRO_0000216702" description="Alkanesulfonate monooxygenase">
    <location>
        <begin position="1"/>
        <end position="389"/>
    </location>
</feature>
<dbReference type="EC" id="1.14.14.5" evidence="1"/>
<dbReference type="EMBL" id="AE007870">
    <property type="protein sequence ID" value="AAK89965.2"/>
    <property type="molecule type" value="Genomic_DNA"/>
</dbReference>
<dbReference type="PIR" id="AI2977">
    <property type="entry name" value="AI2977"/>
</dbReference>
<dbReference type="PIR" id="C98305">
    <property type="entry name" value="C98305"/>
</dbReference>
<dbReference type="RefSeq" id="NP_357180.2">
    <property type="nucleotide sequence ID" value="NC_003063.2"/>
</dbReference>
<dbReference type="RefSeq" id="WP_010973029.1">
    <property type="nucleotide sequence ID" value="NC_003063.2"/>
</dbReference>
<dbReference type="SMR" id="Q8UAE8"/>
<dbReference type="STRING" id="176299.Atu3426"/>
<dbReference type="EnsemblBacteria" id="AAK89965">
    <property type="protein sequence ID" value="AAK89965"/>
    <property type="gene ID" value="Atu3426"/>
</dbReference>
<dbReference type="GeneID" id="1135300"/>
<dbReference type="KEGG" id="atu:Atu3426"/>
<dbReference type="PATRIC" id="fig|176299.10.peg.3266"/>
<dbReference type="eggNOG" id="COG2141">
    <property type="taxonomic scope" value="Bacteria"/>
</dbReference>
<dbReference type="HOGENOM" id="CLU_027853_1_0_5"/>
<dbReference type="OrthoDB" id="9814695at2"/>
<dbReference type="PhylomeDB" id="Q8UAE8"/>
<dbReference type="Proteomes" id="UP000000813">
    <property type="component" value="Chromosome linear"/>
</dbReference>
<dbReference type="GO" id="GO:0008726">
    <property type="term" value="F:alkanesulfonate monooxygenase activity"/>
    <property type="evidence" value="ECO:0007669"/>
    <property type="project" value="UniProtKB-UniRule"/>
</dbReference>
<dbReference type="GO" id="GO:0046306">
    <property type="term" value="P:alkanesulfonate catabolic process"/>
    <property type="evidence" value="ECO:0007669"/>
    <property type="project" value="TreeGrafter"/>
</dbReference>
<dbReference type="CDD" id="cd01094">
    <property type="entry name" value="Alkanesulfonate_monoxygenase"/>
    <property type="match status" value="1"/>
</dbReference>
<dbReference type="Gene3D" id="3.20.20.30">
    <property type="entry name" value="Luciferase-like domain"/>
    <property type="match status" value="1"/>
</dbReference>
<dbReference type="HAMAP" id="MF_01229">
    <property type="entry name" value="Alkanesulf_monooxygen"/>
    <property type="match status" value="1"/>
</dbReference>
<dbReference type="InterPro" id="IPR019911">
    <property type="entry name" value="Alkanesulphonate_mOase_FMN-dep"/>
</dbReference>
<dbReference type="InterPro" id="IPR011251">
    <property type="entry name" value="Luciferase-like_dom"/>
</dbReference>
<dbReference type="InterPro" id="IPR036661">
    <property type="entry name" value="Luciferase-like_sf"/>
</dbReference>
<dbReference type="InterPro" id="IPR050172">
    <property type="entry name" value="SsuD_RutA_monooxygenase"/>
</dbReference>
<dbReference type="NCBIfam" id="TIGR03565">
    <property type="entry name" value="alk_sulf_monoox"/>
    <property type="match status" value="1"/>
</dbReference>
<dbReference type="NCBIfam" id="NF001939">
    <property type="entry name" value="PRK00719.1"/>
    <property type="match status" value="1"/>
</dbReference>
<dbReference type="PANTHER" id="PTHR42847">
    <property type="entry name" value="ALKANESULFONATE MONOOXYGENASE"/>
    <property type="match status" value="1"/>
</dbReference>
<dbReference type="PANTHER" id="PTHR42847:SF4">
    <property type="entry name" value="ALKANESULFONATE MONOOXYGENASE-RELATED"/>
    <property type="match status" value="1"/>
</dbReference>
<dbReference type="Pfam" id="PF00296">
    <property type="entry name" value="Bac_luciferase"/>
    <property type="match status" value="1"/>
</dbReference>
<dbReference type="SUPFAM" id="SSF51679">
    <property type="entry name" value="Bacterial luciferase-like"/>
    <property type="match status" value="1"/>
</dbReference>
<keyword id="KW-0285">Flavoprotein</keyword>
<keyword id="KW-0288">FMN</keyword>
<keyword id="KW-0503">Monooxygenase</keyword>
<keyword id="KW-0560">Oxidoreductase</keyword>
<keyword id="KW-1185">Reference proteome</keyword>
<protein>
    <recommendedName>
        <fullName evidence="1">Alkanesulfonate monooxygenase</fullName>
        <ecNumber evidence="1">1.14.14.5</ecNumber>
    </recommendedName>
    <alternativeName>
        <fullName evidence="1">FMNH2-dependent aliphatic sulfonate monooxygenase</fullName>
    </alternativeName>
</protein>
<organism>
    <name type="scientific">Agrobacterium fabrum (strain C58 / ATCC 33970)</name>
    <name type="common">Agrobacterium tumefaciens (strain C58)</name>
    <dbReference type="NCBI Taxonomy" id="176299"/>
    <lineage>
        <taxon>Bacteria</taxon>
        <taxon>Pseudomonadati</taxon>
        <taxon>Pseudomonadota</taxon>
        <taxon>Alphaproteobacteria</taxon>
        <taxon>Hyphomicrobiales</taxon>
        <taxon>Rhizobiaceae</taxon>
        <taxon>Rhizobium/Agrobacterium group</taxon>
        <taxon>Agrobacterium</taxon>
        <taxon>Agrobacterium tumefaciens complex</taxon>
    </lineage>
</organism>
<proteinExistence type="inferred from homology"/>
<sequence>MSKHDKPLDFLWFIPTSGDGSYLGSDDLSRPADPGYFREIAQAADRLGYSGVLIPTGVACEESFILAANLAAYTEKLKFLVAIRPGVASPAYYARLASTLDRVSHGRLLLNIVVGGSAQELAGDGIFLPHDERYDHADEFFQVFNSLIETGKGDLDGKYIKAQGARLGLPPVQEPRPPLYFGGSSDAGIEFSAGITDKYLTWGEPPAQVAEKIVKVRAAAAKNGREVTFGIRLHFIVRETDEEAWADADRLISKLSDETIASAQEVFSKASDSVGQARMQALHNGRRDKLEVSPNLWAGIGLVRSGAGTALVGSPKTVAARLREYQALGIDTVIASGYPHLEEAYRLSELLFPEIGIDGPRNQIRSSFGAKQVFGGGGHGGNVKLVSGS</sequence>